<gene>
    <name type="ordered locus">Pret-133</name>
</gene>
<accession>P0C8F2</accession>
<protein>
    <recommendedName>
        <fullName>Serine/threonine-protein kinase 1</fullName>
        <ecNumber>2.7.11.1</ecNumber>
    </recommendedName>
</protein>
<feature type="chain" id="PRO_0000355057" description="Serine/threonine-protein kinase 1">
    <location>
        <begin position="1"/>
        <end position="298"/>
    </location>
</feature>
<feature type="domain" description="Protein kinase" evidence="3">
    <location>
        <begin position="38"/>
        <end position="276"/>
    </location>
</feature>
<feature type="active site" description="Proton acceptor" evidence="3 4">
    <location>
        <position position="152"/>
    </location>
</feature>
<feature type="binding site" evidence="3">
    <location>
        <begin position="45"/>
        <end position="53"/>
    </location>
    <ligand>
        <name>ATP</name>
        <dbReference type="ChEBI" id="CHEBI:30616"/>
    </ligand>
</feature>
<feature type="binding site" evidence="3">
    <location>
        <position position="65"/>
    </location>
    <ligand>
        <name>ATP</name>
        <dbReference type="ChEBI" id="CHEBI:30616"/>
    </ligand>
</feature>
<sequence length="298" mass="34981">MSRPEQQLKKMLKNPQAQYAVYPTAKVERISTTQHMYFIATRPMFEGGRNNVFLGHQVGQPIIFKYVSKKEIPGNEVIVLKALQDTPGVIKLIEYTENAMYHILIIEYIPNSVDLLHYHYFKKLEETEAKKIIFQLILIIQNIYEKGFIHGDIKDENLIIDINQKIIKVIDFGSAVRLDETRPQYNMFGTWEYVCPEFYYYGYYYQLPLTVWTIGMVAVNLFRFRAENFYLNDILKGENYIPENISETGKQFITDCLTINENKRLSFKSLVSHPWFKGLKKEIQPISELGVDYKNVIT</sequence>
<keyword id="KW-0067">ATP-binding</keyword>
<keyword id="KW-1035">Host cytoplasm</keyword>
<keyword id="KW-0418">Kinase</keyword>
<keyword id="KW-0426">Late protein</keyword>
<keyword id="KW-0547">Nucleotide-binding</keyword>
<keyword id="KW-0723">Serine/threonine-protein kinase</keyword>
<keyword id="KW-0808">Transferase</keyword>
<keyword id="KW-0946">Virion</keyword>
<proteinExistence type="inferred from homology"/>
<evidence type="ECO:0000250" key="1"/>
<evidence type="ECO:0000250" key="2">
    <source>
        <dbReference type="UniProtKB" id="P34206"/>
    </source>
</evidence>
<evidence type="ECO:0000255" key="3">
    <source>
        <dbReference type="PROSITE-ProRule" id="PRU00159"/>
    </source>
</evidence>
<evidence type="ECO:0000255" key="4">
    <source>
        <dbReference type="PROSITE-ProRule" id="PRU10027"/>
    </source>
</evidence>
<evidence type="ECO:0000305" key="5"/>
<organismHost>
    <name type="scientific">Ornithodoros</name>
    <name type="common">relapsing fever ticks</name>
    <dbReference type="NCBI Taxonomy" id="6937"/>
</organismHost>
<organismHost>
    <name type="scientific">Phacochoerus aethiopicus</name>
    <name type="common">Warthog</name>
    <dbReference type="NCBI Taxonomy" id="85517"/>
</organismHost>
<organismHost>
    <name type="scientific">Phacochoerus africanus</name>
    <name type="common">Warthog</name>
    <dbReference type="NCBI Taxonomy" id="41426"/>
</organismHost>
<organismHost>
    <name type="scientific">Potamochoerus larvatus</name>
    <name type="common">Bushpig</name>
    <dbReference type="NCBI Taxonomy" id="273792"/>
</organismHost>
<organismHost>
    <name type="scientific">Sus scrofa</name>
    <name type="common">Pig</name>
    <dbReference type="NCBI Taxonomy" id="9823"/>
</organismHost>
<organism>
    <name type="scientific">African swine fever virus (isolate Tick/South Africa/Pretoriuskop Pr4/1996)</name>
    <name type="common">ASFV</name>
    <dbReference type="NCBI Taxonomy" id="561443"/>
    <lineage>
        <taxon>Viruses</taxon>
        <taxon>Varidnaviria</taxon>
        <taxon>Bamfordvirae</taxon>
        <taxon>Nucleocytoviricota</taxon>
        <taxon>Pokkesviricetes</taxon>
        <taxon>Asfuvirales</taxon>
        <taxon>Asfarviridae</taxon>
        <taxon>Asfivirus</taxon>
        <taxon>African swine fever virus</taxon>
    </lineage>
</organism>
<comment type="function">
    <text evidence="2">Essential for viral replication. It may mediate the virus' progression through DNA replication.</text>
</comment>
<comment type="catalytic activity">
    <reaction>
        <text>L-seryl-[protein] + ATP = O-phospho-L-seryl-[protein] + ADP + H(+)</text>
        <dbReference type="Rhea" id="RHEA:17989"/>
        <dbReference type="Rhea" id="RHEA-COMP:9863"/>
        <dbReference type="Rhea" id="RHEA-COMP:11604"/>
        <dbReference type="ChEBI" id="CHEBI:15378"/>
        <dbReference type="ChEBI" id="CHEBI:29999"/>
        <dbReference type="ChEBI" id="CHEBI:30616"/>
        <dbReference type="ChEBI" id="CHEBI:83421"/>
        <dbReference type="ChEBI" id="CHEBI:456216"/>
        <dbReference type="EC" id="2.7.11.1"/>
    </reaction>
</comment>
<comment type="catalytic activity">
    <reaction>
        <text>L-threonyl-[protein] + ATP = O-phospho-L-threonyl-[protein] + ADP + H(+)</text>
        <dbReference type="Rhea" id="RHEA:46608"/>
        <dbReference type="Rhea" id="RHEA-COMP:11060"/>
        <dbReference type="Rhea" id="RHEA-COMP:11605"/>
        <dbReference type="ChEBI" id="CHEBI:15378"/>
        <dbReference type="ChEBI" id="CHEBI:30013"/>
        <dbReference type="ChEBI" id="CHEBI:30616"/>
        <dbReference type="ChEBI" id="CHEBI:61977"/>
        <dbReference type="ChEBI" id="CHEBI:456216"/>
        <dbReference type="EC" id="2.7.11.1"/>
    </reaction>
</comment>
<comment type="subcellular location">
    <subcellularLocation>
        <location evidence="2">Virion</location>
    </subcellularLocation>
    <subcellularLocation>
        <location evidence="1">Host cytoplasm</location>
    </subcellularLocation>
</comment>
<comment type="induction">
    <text evidence="5">Expressed in the late phase of the viral replicative cycle.</text>
</comment>
<comment type="similarity">
    <text evidence="3">Belongs to the protein kinase superfamily. Ser/Thr protein kinase family.</text>
</comment>
<reference key="1">
    <citation type="submission" date="2003-03" db="EMBL/GenBank/DDBJ databases">
        <title>African swine fever virus genomes.</title>
        <authorList>
            <person name="Kutish G.F."/>
            <person name="Rock D.L."/>
        </authorList>
    </citation>
    <scope>NUCLEOTIDE SEQUENCE [GENOMIC DNA]</scope>
</reference>
<name>PK1_ASFP4</name>
<dbReference type="EC" id="2.7.11.1"/>
<dbReference type="EMBL" id="AY261363">
    <property type="status" value="NOT_ANNOTATED_CDS"/>
    <property type="molecule type" value="Genomic_DNA"/>
</dbReference>
<dbReference type="SMR" id="P0C8F2"/>
<dbReference type="Proteomes" id="UP000000859">
    <property type="component" value="Segment"/>
</dbReference>
<dbReference type="GO" id="GO:0030430">
    <property type="term" value="C:host cell cytoplasm"/>
    <property type="evidence" value="ECO:0007669"/>
    <property type="project" value="UniProtKB-SubCell"/>
</dbReference>
<dbReference type="GO" id="GO:0044423">
    <property type="term" value="C:virion component"/>
    <property type="evidence" value="ECO:0007669"/>
    <property type="project" value="UniProtKB-KW"/>
</dbReference>
<dbReference type="GO" id="GO:0005524">
    <property type="term" value="F:ATP binding"/>
    <property type="evidence" value="ECO:0007669"/>
    <property type="project" value="UniProtKB-KW"/>
</dbReference>
<dbReference type="GO" id="GO:0106310">
    <property type="term" value="F:protein serine kinase activity"/>
    <property type="evidence" value="ECO:0007669"/>
    <property type="project" value="RHEA"/>
</dbReference>
<dbReference type="GO" id="GO:0004674">
    <property type="term" value="F:protein serine/threonine kinase activity"/>
    <property type="evidence" value="ECO:0007669"/>
    <property type="project" value="UniProtKB-KW"/>
</dbReference>
<dbReference type="Gene3D" id="1.10.510.10">
    <property type="entry name" value="Transferase(Phosphotransferase) domain 1"/>
    <property type="match status" value="1"/>
</dbReference>
<dbReference type="InterPro" id="IPR011009">
    <property type="entry name" value="Kinase-like_dom_sf"/>
</dbReference>
<dbReference type="InterPro" id="IPR051138">
    <property type="entry name" value="PIM_Ser/Thr_kinase"/>
</dbReference>
<dbReference type="InterPro" id="IPR000719">
    <property type="entry name" value="Prot_kinase_dom"/>
</dbReference>
<dbReference type="InterPro" id="IPR008271">
    <property type="entry name" value="Ser/Thr_kinase_AS"/>
</dbReference>
<dbReference type="PANTHER" id="PTHR22984:SF25">
    <property type="entry name" value="PROTEIN KINASE DOMAIN-CONTAINING PROTEIN"/>
    <property type="match status" value="1"/>
</dbReference>
<dbReference type="PANTHER" id="PTHR22984">
    <property type="entry name" value="SERINE/THREONINE-PROTEIN KINASE PIM"/>
    <property type="match status" value="1"/>
</dbReference>
<dbReference type="Pfam" id="PF00069">
    <property type="entry name" value="Pkinase"/>
    <property type="match status" value="1"/>
</dbReference>
<dbReference type="SMART" id="SM00220">
    <property type="entry name" value="S_TKc"/>
    <property type="match status" value="1"/>
</dbReference>
<dbReference type="SUPFAM" id="SSF56112">
    <property type="entry name" value="Protein kinase-like (PK-like)"/>
    <property type="match status" value="1"/>
</dbReference>
<dbReference type="PROSITE" id="PS50011">
    <property type="entry name" value="PROTEIN_KINASE_DOM"/>
    <property type="match status" value="1"/>
</dbReference>
<dbReference type="PROSITE" id="PS00108">
    <property type="entry name" value="PROTEIN_KINASE_ST"/>
    <property type="match status" value="1"/>
</dbReference>